<reference key="1">
    <citation type="journal article" date="2000" name="Nature">
        <title>Sequence and analysis of chromosome 1 of the plant Arabidopsis thaliana.</title>
        <authorList>
            <person name="Theologis A."/>
            <person name="Ecker J.R."/>
            <person name="Palm C.J."/>
            <person name="Federspiel N.A."/>
            <person name="Kaul S."/>
            <person name="White O."/>
            <person name="Alonso J."/>
            <person name="Altafi H."/>
            <person name="Araujo R."/>
            <person name="Bowman C.L."/>
            <person name="Brooks S.Y."/>
            <person name="Buehler E."/>
            <person name="Chan A."/>
            <person name="Chao Q."/>
            <person name="Chen H."/>
            <person name="Cheuk R.F."/>
            <person name="Chin C.W."/>
            <person name="Chung M.K."/>
            <person name="Conn L."/>
            <person name="Conway A.B."/>
            <person name="Conway A.R."/>
            <person name="Creasy T.H."/>
            <person name="Dewar K."/>
            <person name="Dunn P."/>
            <person name="Etgu P."/>
            <person name="Feldblyum T.V."/>
            <person name="Feng J.-D."/>
            <person name="Fong B."/>
            <person name="Fujii C.Y."/>
            <person name="Gill J.E."/>
            <person name="Goldsmith A.D."/>
            <person name="Haas B."/>
            <person name="Hansen N.F."/>
            <person name="Hughes B."/>
            <person name="Huizar L."/>
            <person name="Hunter J.L."/>
            <person name="Jenkins J."/>
            <person name="Johnson-Hopson C."/>
            <person name="Khan S."/>
            <person name="Khaykin E."/>
            <person name="Kim C.J."/>
            <person name="Koo H.L."/>
            <person name="Kremenetskaia I."/>
            <person name="Kurtz D.B."/>
            <person name="Kwan A."/>
            <person name="Lam B."/>
            <person name="Langin-Hooper S."/>
            <person name="Lee A."/>
            <person name="Lee J.M."/>
            <person name="Lenz C.A."/>
            <person name="Li J.H."/>
            <person name="Li Y.-P."/>
            <person name="Lin X."/>
            <person name="Liu S.X."/>
            <person name="Liu Z.A."/>
            <person name="Luros J.S."/>
            <person name="Maiti R."/>
            <person name="Marziali A."/>
            <person name="Militscher J."/>
            <person name="Miranda M."/>
            <person name="Nguyen M."/>
            <person name="Nierman W.C."/>
            <person name="Osborne B.I."/>
            <person name="Pai G."/>
            <person name="Peterson J."/>
            <person name="Pham P.K."/>
            <person name="Rizzo M."/>
            <person name="Rooney T."/>
            <person name="Rowley D."/>
            <person name="Sakano H."/>
            <person name="Salzberg S.L."/>
            <person name="Schwartz J.R."/>
            <person name="Shinn P."/>
            <person name="Southwick A.M."/>
            <person name="Sun H."/>
            <person name="Tallon L.J."/>
            <person name="Tambunga G."/>
            <person name="Toriumi M.J."/>
            <person name="Town C.D."/>
            <person name="Utterback T."/>
            <person name="Van Aken S."/>
            <person name="Vaysberg M."/>
            <person name="Vysotskaia V.S."/>
            <person name="Walker M."/>
            <person name="Wu D."/>
            <person name="Yu G."/>
            <person name="Fraser C.M."/>
            <person name="Venter J.C."/>
            <person name="Davis R.W."/>
        </authorList>
    </citation>
    <scope>NUCLEOTIDE SEQUENCE [LARGE SCALE GENOMIC DNA]</scope>
    <source>
        <strain>cv. Columbia</strain>
    </source>
</reference>
<reference key="2">
    <citation type="journal article" date="2017" name="Plant J.">
        <title>Araport11: a complete reannotation of the Arabidopsis thaliana reference genome.</title>
        <authorList>
            <person name="Cheng C.Y."/>
            <person name="Krishnakumar V."/>
            <person name="Chan A.P."/>
            <person name="Thibaud-Nissen F."/>
            <person name="Schobel S."/>
            <person name="Town C.D."/>
        </authorList>
    </citation>
    <scope>GENOME REANNOTATION</scope>
    <source>
        <strain>cv. Columbia</strain>
    </source>
</reference>
<reference key="3">
    <citation type="submission" date="2006-07" db="EMBL/GenBank/DDBJ databases">
        <title>Large-scale analysis of RIKEN Arabidopsis full-length (RAFL) cDNAs.</title>
        <authorList>
            <person name="Totoki Y."/>
            <person name="Seki M."/>
            <person name="Ishida J."/>
            <person name="Nakajima M."/>
            <person name="Enju A."/>
            <person name="Kamiya A."/>
            <person name="Narusaka M."/>
            <person name="Shin-i T."/>
            <person name="Nakagawa M."/>
            <person name="Sakamoto N."/>
            <person name="Oishi K."/>
            <person name="Kohara Y."/>
            <person name="Kobayashi M."/>
            <person name="Toyoda A."/>
            <person name="Sakaki Y."/>
            <person name="Sakurai T."/>
            <person name="Iida K."/>
            <person name="Akiyama K."/>
            <person name="Satou M."/>
            <person name="Toyoda T."/>
            <person name="Konagaya A."/>
            <person name="Carninci P."/>
            <person name="Kawai J."/>
            <person name="Hayashizaki Y."/>
            <person name="Shinozaki K."/>
        </authorList>
    </citation>
    <scope>NUCLEOTIDE SEQUENCE [LARGE SCALE MRNA]</scope>
    <source>
        <strain>cv. Columbia</strain>
    </source>
</reference>
<reference key="4">
    <citation type="journal article" date="2003" name="Plant Physiol.">
        <title>Analysis of the small GTPase gene superfamily of Arabidopsis.</title>
        <authorList>
            <person name="Vernoud V."/>
            <person name="Horton A.C."/>
            <person name="Yang Z."/>
            <person name="Nielsen E."/>
        </authorList>
    </citation>
    <scope>GENE FAMILY</scope>
    <scope>NOMENCLATURE</scope>
</reference>
<organism>
    <name type="scientific">Arabidopsis thaliana</name>
    <name type="common">Mouse-ear cress</name>
    <dbReference type="NCBI Taxonomy" id="3702"/>
    <lineage>
        <taxon>Eukaryota</taxon>
        <taxon>Viridiplantae</taxon>
        <taxon>Streptophyta</taxon>
        <taxon>Embryophyta</taxon>
        <taxon>Tracheophyta</taxon>
        <taxon>Spermatophyta</taxon>
        <taxon>Magnoliopsida</taxon>
        <taxon>eudicotyledons</taxon>
        <taxon>Gunneridae</taxon>
        <taxon>Pentapetalae</taxon>
        <taxon>rosids</taxon>
        <taxon>malvids</taxon>
        <taxon>Brassicales</taxon>
        <taxon>Brassicaceae</taxon>
        <taxon>Camelineae</taxon>
        <taxon>Arabidopsis</taxon>
    </lineage>
</organism>
<feature type="chain" id="PRO_0000407353" description="Ras-related protein RABA6b">
    <location>
        <begin position="1"/>
        <end position="229"/>
    </location>
</feature>
<feature type="short sequence motif" description="Effector region" evidence="1">
    <location>
        <begin position="42"/>
        <end position="50"/>
    </location>
</feature>
<feature type="binding site" evidence="1">
    <location>
        <begin position="20"/>
        <end position="27"/>
    </location>
    <ligand>
        <name>GTP</name>
        <dbReference type="ChEBI" id="CHEBI:37565"/>
    </ligand>
</feature>
<feature type="binding site" evidence="1">
    <location>
        <begin position="68"/>
        <end position="72"/>
    </location>
    <ligand>
        <name>GTP</name>
        <dbReference type="ChEBI" id="CHEBI:37565"/>
    </ligand>
</feature>
<feature type="binding site" evidence="1">
    <location>
        <begin position="126"/>
        <end position="129"/>
    </location>
    <ligand>
        <name>GTP</name>
        <dbReference type="ChEBI" id="CHEBI:37565"/>
    </ligand>
</feature>
<feature type="binding site" evidence="1">
    <location>
        <begin position="156"/>
        <end position="157"/>
    </location>
    <ligand>
        <name>GTP</name>
        <dbReference type="ChEBI" id="CHEBI:37565"/>
    </ligand>
</feature>
<feature type="lipid moiety-binding region" description="S-geranylgeranyl cysteine" evidence="1">
    <location>
        <position position="226"/>
    </location>
</feature>
<feature type="lipid moiety-binding region" description="S-geranylgeranyl cysteine" evidence="1">
    <location>
        <position position="227"/>
    </location>
</feature>
<feature type="sequence conflict" description="In Ref. 3; BAF00565." evidence="2" ref="3">
    <original>S</original>
    <variation>G</variation>
    <location>
        <position position="220"/>
    </location>
</feature>
<accession>Q0WQN4</accession>
<accession>Q9LM28</accession>
<accession>Q9LMR7</accession>
<proteinExistence type="evidence at transcript level"/>
<evidence type="ECO:0000250" key="1"/>
<evidence type="ECO:0000305" key="2"/>
<sequence>MAEESYDEECDYLFKAVLIGDSAVGKSNLLSRFSRDEFRLDSKPTIGVDFAYRNVRVGDKTIKAQIWDTAGQERFRAITSSYYRGALGALLIYDITRRITFKNIEKWLSELRGFSSPETVVVLVGNKSDLGQSREVEEEEGKTLAESEGLYFLETSALENQNVEEAFLSMIGRIHEVLTQKIVLDNRLNGDGNNESNGAVVPPGKEIVNIHEVTATRPLSTSLSNCCYK</sequence>
<comment type="function">
    <text evidence="1">Intracellular vesicle trafficking and protein transport.</text>
</comment>
<comment type="subcellular location">
    <subcellularLocation>
        <location evidence="2">Cell membrane</location>
        <topology evidence="2">Lipid-anchor</topology>
        <orientation evidence="2">Cytoplasmic side</orientation>
    </subcellularLocation>
</comment>
<comment type="similarity">
    <text evidence="2">Belongs to the small GTPase superfamily. Rab family.</text>
</comment>
<comment type="sequence caution" evidence="2">
    <conflict type="erroneous gene model prediction">
        <sequence resource="EMBL-CDS" id="AAF78385"/>
    </conflict>
</comment>
<comment type="sequence caution" evidence="2">
    <conflict type="erroneous gene model prediction">
        <sequence resource="EMBL-CDS" id="AAF97836"/>
    </conflict>
</comment>
<dbReference type="EMBL" id="AC034107">
    <property type="protein sequence ID" value="AAF97836.1"/>
    <property type="status" value="ALT_SEQ"/>
    <property type="molecule type" value="Genomic_DNA"/>
</dbReference>
<dbReference type="EMBL" id="AC069551">
    <property type="protein sequence ID" value="AAF78385.1"/>
    <property type="status" value="ALT_SEQ"/>
    <property type="molecule type" value="Genomic_DNA"/>
</dbReference>
<dbReference type="EMBL" id="CP002684">
    <property type="protein sequence ID" value="AEE29686.1"/>
    <property type="molecule type" value="Genomic_DNA"/>
</dbReference>
<dbReference type="EMBL" id="AK228658">
    <property type="protein sequence ID" value="BAF00565.1"/>
    <property type="molecule type" value="mRNA"/>
</dbReference>
<dbReference type="RefSeq" id="NP_173258.2">
    <property type="nucleotide sequence ID" value="NM_101680.3"/>
</dbReference>
<dbReference type="SMR" id="Q0WQN4"/>
<dbReference type="BioGRID" id="23638">
    <property type="interactions" value="1"/>
</dbReference>
<dbReference type="FunCoup" id="Q0WQN4">
    <property type="interactions" value="76"/>
</dbReference>
<dbReference type="STRING" id="3702.Q0WQN4"/>
<dbReference type="iPTMnet" id="Q0WQN4"/>
<dbReference type="PaxDb" id="3702-AT1G18200.1"/>
<dbReference type="ProteomicsDB" id="236485"/>
<dbReference type="EnsemblPlants" id="AT1G18200.1">
    <property type="protein sequence ID" value="AT1G18200.1"/>
    <property type="gene ID" value="AT1G18200"/>
</dbReference>
<dbReference type="GeneID" id="838399"/>
<dbReference type="Gramene" id="AT1G18200.1">
    <property type="protein sequence ID" value="AT1G18200.1"/>
    <property type="gene ID" value="AT1G18200"/>
</dbReference>
<dbReference type="KEGG" id="ath:AT1G18200"/>
<dbReference type="Araport" id="AT1G18200"/>
<dbReference type="TAIR" id="AT1G18200">
    <property type="gene designation" value="RABA6B"/>
</dbReference>
<dbReference type="eggNOG" id="KOG0087">
    <property type="taxonomic scope" value="Eukaryota"/>
</dbReference>
<dbReference type="HOGENOM" id="CLU_041217_23_2_1"/>
<dbReference type="InParanoid" id="Q0WQN4"/>
<dbReference type="OMA" id="DTFDEEC"/>
<dbReference type="OrthoDB" id="9989112at2759"/>
<dbReference type="PRO" id="PR:Q0WQN4"/>
<dbReference type="Proteomes" id="UP000006548">
    <property type="component" value="Chromosome 1"/>
</dbReference>
<dbReference type="ExpressionAtlas" id="Q0WQN4">
    <property type="expression patterns" value="baseline and differential"/>
</dbReference>
<dbReference type="GO" id="GO:0005886">
    <property type="term" value="C:plasma membrane"/>
    <property type="evidence" value="ECO:0007669"/>
    <property type="project" value="UniProtKB-SubCell"/>
</dbReference>
<dbReference type="GO" id="GO:0005525">
    <property type="term" value="F:GTP binding"/>
    <property type="evidence" value="ECO:0007669"/>
    <property type="project" value="UniProtKB-KW"/>
</dbReference>
<dbReference type="GO" id="GO:0003924">
    <property type="term" value="F:GTPase activity"/>
    <property type="evidence" value="ECO:0007669"/>
    <property type="project" value="InterPro"/>
</dbReference>
<dbReference type="GO" id="GO:0015031">
    <property type="term" value="P:protein transport"/>
    <property type="evidence" value="ECO:0007669"/>
    <property type="project" value="UniProtKB-KW"/>
</dbReference>
<dbReference type="CDD" id="cd01868">
    <property type="entry name" value="Rab11_like"/>
    <property type="match status" value="1"/>
</dbReference>
<dbReference type="FunFam" id="3.40.50.300:FF:000274">
    <property type="entry name" value="ras-related protein RABA5a"/>
    <property type="match status" value="1"/>
</dbReference>
<dbReference type="Gene3D" id="3.40.50.300">
    <property type="entry name" value="P-loop containing nucleotide triphosphate hydrolases"/>
    <property type="match status" value="1"/>
</dbReference>
<dbReference type="InterPro" id="IPR027417">
    <property type="entry name" value="P-loop_NTPase"/>
</dbReference>
<dbReference type="InterPro" id="IPR050209">
    <property type="entry name" value="Rab_GTPases_membrane_traffic"/>
</dbReference>
<dbReference type="InterPro" id="IPR005225">
    <property type="entry name" value="Small_GTP-bd"/>
</dbReference>
<dbReference type="InterPro" id="IPR001806">
    <property type="entry name" value="Small_GTPase"/>
</dbReference>
<dbReference type="NCBIfam" id="TIGR00231">
    <property type="entry name" value="small_GTP"/>
    <property type="match status" value="1"/>
</dbReference>
<dbReference type="PANTHER" id="PTHR47979">
    <property type="entry name" value="DRAB11-RELATED"/>
    <property type="match status" value="1"/>
</dbReference>
<dbReference type="Pfam" id="PF00071">
    <property type="entry name" value="Ras"/>
    <property type="match status" value="1"/>
</dbReference>
<dbReference type="PRINTS" id="PR00449">
    <property type="entry name" value="RASTRNSFRMNG"/>
</dbReference>
<dbReference type="SMART" id="SM00175">
    <property type="entry name" value="RAB"/>
    <property type="match status" value="1"/>
</dbReference>
<dbReference type="SMART" id="SM00176">
    <property type="entry name" value="RAN"/>
    <property type="match status" value="1"/>
</dbReference>
<dbReference type="SMART" id="SM00173">
    <property type="entry name" value="RAS"/>
    <property type="match status" value="1"/>
</dbReference>
<dbReference type="SMART" id="SM00174">
    <property type="entry name" value="RHO"/>
    <property type="match status" value="1"/>
</dbReference>
<dbReference type="SUPFAM" id="SSF52540">
    <property type="entry name" value="P-loop containing nucleoside triphosphate hydrolases"/>
    <property type="match status" value="1"/>
</dbReference>
<dbReference type="PROSITE" id="PS51419">
    <property type="entry name" value="RAB"/>
    <property type="match status" value="1"/>
</dbReference>
<gene>
    <name type="primary">RABA6B</name>
    <name type="ordered locus">At1g18200</name>
    <name type="ORF">T10F20.21</name>
</gene>
<keyword id="KW-1003">Cell membrane</keyword>
<keyword id="KW-0342">GTP-binding</keyword>
<keyword id="KW-0449">Lipoprotein</keyword>
<keyword id="KW-0472">Membrane</keyword>
<keyword id="KW-0547">Nucleotide-binding</keyword>
<keyword id="KW-0636">Prenylation</keyword>
<keyword id="KW-0653">Protein transport</keyword>
<keyword id="KW-1185">Reference proteome</keyword>
<keyword id="KW-0813">Transport</keyword>
<name>RAA6B_ARATH</name>
<protein>
    <recommendedName>
        <fullName>Ras-related protein RABA6b</fullName>
        <shortName>AtRABA6b</shortName>
    </recommendedName>
</protein>